<reference key="1">
    <citation type="journal article" date="1988" name="Gen. Comp. Endocrinol.">
        <title>Isolation and structure of lamprey (Petromyzon marinus) insulin.</title>
        <authorList>
            <person name="Plisetskaya E.M."/>
            <person name="Pollock H.G."/>
            <person name="Elliott W.M."/>
            <person name="Youson J.H."/>
            <person name="Andrews P.C."/>
        </authorList>
    </citation>
    <scope>PROTEIN SEQUENCE</scope>
</reference>
<evidence type="ECO:0000305" key="1"/>
<proteinExistence type="evidence at protein level"/>
<sequence length="57" mass="6207">SALTGAGGTHLCGSHLVEALYVVCGDRGFFYTPSKTGIVEQCCHRKCSIYDMENYCN</sequence>
<accession>P68987</accession>
<accession>P14806</accession>
<accession>Q9PRR1</accession>
<accession>Q9PRR2</accession>
<organism>
    <name type="scientific">Petromyzon marinus</name>
    <name type="common">Sea lamprey</name>
    <dbReference type="NCBI Taxonomy" id="7757"/>
    <lineage>
        <taxon>Eukaryota</taxon>
        <taxon>Metazoa</taxon>
        <taxon>Chordata</taxon>
        <taxon>Craniata</taxon>
        <taxon>Vertebrata</taxon>
        <taxon>Cyclostomata</taxon>
        <taxon>Hyperoartia</taxon>
        <taxon>Petromyzontiformes</taxon>
        <taxon>Petromyzontidae</taxon>
        <taxon>Petromyzon</taxon>
    </lineage>
</organism>
<gene>
    <name type="primary">ins</name>
</gene>
<feature type="peptide" id="PRO_0000015873" description="Insulin B chain">
    <location>
        <begin position="1"/>
        <end position="36"/>
    </location>
</feature>
<feature type="peptide" id="PRO_0000015874" description="Insulin A chain">
    <location>
        <begin position="37"/>
        <end position="57"/>
    </location>
</feature>
<feature type="disulfide bond" description="Interchain (between B and A chains)">
    <location>
        <begin position="12"/>
        <end position="43"/>
    </location>
</feature>
<feature type="disulfide bond" description="Interchain (between B and A chains)">
    <location>
        <begin position="24"/>
        <end position="56"/>
    </location>
</feature>
<feature type="disulfide bond">
    <location>
        <begin position="42"/>
        <end position="47"/>
    </location>
</feature>
<feature type="non-consecutive residues" evidence="1">
    <location>
        <begin position="36"/>
        <end position="37"/>
    </location>
</feature>
<dbReference type="PIR" id="S06338">
    <property type="entry name" value="INLMS"/>
</dbReference>
<dbReference type="SMR" id="P68987"/>
<dbReference type="STRING" id="7757.ENSPMAP00000009873"/>
<dbReference type="Ensembl" id="ENSPMAT00000009915.1">
    <property type="protein sequence ID" value="ENSPMAP00000009873.1"/>
    <property type="gene ID" value="ENSPMAG00000008971.1"/>
</dbReference>
<dbReference type="GeneTree" id="ENSGT00940000164327"/>
<dbReference type="HOGENOM" id="CLU_3092712_0_0_1"/>
<dbReference type="OMA" id="SIYDMEN"/>
<dbReference type="Proteomes" id="UP001318040">
    <property type="component" value="Unplaced"/>
</dbReference>
<dbReference type="GO" id="GO:0005615">
    <property type="term" value="C:extracellular space"/>
    <property type="evidence" value="ECO:0007669"/>
    <property type="project" value="TreeGrafter"/>
</dbReference>
<dbReference type="GO" id="GO:0005179">
    <property type="term" value="F:hormone activity"/>
    <property type="evidence" value="ECO:0007669"/>
    <property type="project" value="UniProtKB-KW"/>
</dbReference>
<dbReference type="GO" id="GO:0006006">
    <property type="term" value="P:glucose metabolic process"/>
    <property type="evidence" value="ECO:0007669"/>
    <property type="project" value="UniProtKB-KW"/>
</dbReference>
<dbReference type="CDD" id="cd04367">
    <property type="entry name" value="IlGF_insulin_like"/>
    <property type="match status" value="1"/>
</dbReference>
<dbReference type="Gene3D" id="1.10.100.10">
    <property type="entry name" value="Insulin-like"/>
    <property type="match status" value="1"/>
</dbReference>
<dbReference type="InterPro" id="IPR004825">
    <property type="entry name" value="Insulin"/>
</dbReference>
<dbReference type="InterPro" id="IPR016179">
    <property type="entry name" value="Insulin-like"/>
</dbReference>
<dbReference type="InterPro" id="IPR036438">
    <property type="entry name" value="Insulin-like_sf"/>
</dbReference>
<dbReference type="InterPro" id="IPR022353">
    <property type="entry name" value="Insulin_CS"/>
</dbReference>
<dbReference type="InterPro" id="IPR022352">
    <property type="entry name" value="Insulin_family"/>
</dbReference>
<dbReference type="PANTHER" id="PTHR11454:SF9">
    <property type="entry name" value="INSULIN"/>
    <property type="match status" value="1"/>
</dbReference>
<dbReference type="PANTHER" id="PTHR11454">
    <property type="entry name" value="INSULIN/INSULIN GROWTH FACTOR"/>
    <property type="match status" value="1"/>
</dbReference>
<dbReference type="Pfam" id="PF00049">
    <property type="entry name" value="Insulin"/>
    <property type="match status" value="2"/>
</dbReference>
<dbReference type="PRINTS" id="PR00277">
    <property type="entry name" value="INSULIN"/>
</dbReference>
<dbReference type="PRINTS" id="PR00276">
    <property type="entry name" value="INSULINFAMLY"/>
</dbReference>
<dbReference type="SMART" id="SM00078">
    <property type="entry name" value="IlGF"/>
    <property type="match status" value="1"/>
</dbReference>
<dbReference type="SUPFAM" id="SSF56994">
    <property type="entry name" value="Insulin-like"/>
    <property type="match status" value="1"/>
</dbReference>
<dbReference type="PROSITE" id="PS00262">
    <property type="entry name" value="INSULIN"/>
    <property type="match status" value="1"/>
</dbReference>
<protein>
    <recommendedName>
        <fullName>Insulin</fullName>
    </recommendedName>
    <component>
        <recommendedName>
            <fullName>Insulin B chain</fullName>
        </recommendedName>
    </component>
    <component>
        <recommendedName>
            <fullName>Insulin A chain</fullName>
        </recommendedName>
    </component>
</protein>
<keyword id="KW-0119">Carbohydrate metabolism</keyword>
<keyword id="KW-0903">Direct protein sequencing</keyword>
<keyword id="KW-1015">Disulfide bond</keyword>
<keyword id="KW-0313">Glucose metabolism</keyword>
<keyword id="KW-0372">Hormone</keyword>
<keyword id="KW-0964">Secreted</keyword>
<comment type="function">
    <text>Insulin decreases blood glucose concentration. It increases cell permeability to monosaccharides, amino acids and fatty acids. It accelerates glycolysis, the pentose phosphate cycle, and glycogen synthesis in liver.</text>
</comment>
<comment type="subunit">
    <text>Heterodimer of a B chain and an A chain linked by two disulfide bonds.</text>
</comment>
<comment type="subcellular location">
    <subcellularLocation>
        <location>Secreted</location>
    </subcellularLocation>
</comment>
<comment type="similarity">
    <text evidence="1">Belongs to the insulin family.</text>
</comment>
<name>INS_PETMA</name>